<evidence type="ECO:0000250" key="1">
    <source>
        <dbReference type="UniProtKB" id="B2HSU6"/>
    </source>
</evidence>
<evidence type="ECO:0000250" key="2">
    <source>
        <dbReference type="UniProtKB" id="P9WNQ3"/>
    </source>
</evidence>
<evidence type="ECO:0000255" key="3"/>
<evidence type="ECO:0000269" key="4">
    <source>
    </source>
</evidence>
<evidence type="ECO:0000269" key="5">
    <source>
    </source>
</evidence>
<evidence type="ECO:0000303" key="6">
    <source>
    </source>
</evidence>
<evidence type="ECO:0000305" key="7"/>
<evidence type="ECO:0000312" key="8">
    <source>
        <dbReference type="EMBL" id="ABK74115.1"/>
    </source>
</evidence>
<evidence type="ECO:0000312" key="9">
    <source>
        <dbReference type="EMBL" id="AFP37088.1"/>
    </source>
</evidence>
<protein>
    <recommendedName>
        <fullName evidence="2">ESX-3 secretion system protein EccD3</fullName>
    </recommendedName>
    <alternativeName>
        <fullName evidence="2">ESX conserved component D3</fullName>
    </alternativeName>
    <alternativeName>
        <fullName evidence="2">Type VII secretion system protein EccD3</fullName>
        <shortName evidence="2">T7SS protein EccD3</shortName>
    </alternativeName>
</protein>
<feature type="chain" id="PRO_0000434992" description="ESX-3 secretion system protein EccD3">
    <location>
        <begin position="1"/>
        <end position="475"/>
    </location>
</feature>
<feature type="transmembrane region" description="Helical" evidence="3">
    <location>
        <begin position="132"/>
        <end position="152"/>
    </location>
</feature>
<feature type="transmembrane region" description="Helical" evidence="3">
    <location>
        <begin position="161"/>
        <end position="181"/>
    </location>
</feature>
<feature type="transmembrane region" description="Helical" evidence="3">
    <location>
        <begin position="186"/>
        <end position="206"/>
    </location>
</feature>
<feature type="transmembrane region" description="Helical" evidence="3">
    <location>
        <begin position="212"/>
        <end position="232"/>
    </location>
</feature>
<feature type="transmembrane region" description="Helical" evidence="3">
    <location>
        <begin position="241"/>
        <end position="261"/>
    </location>
</feature>
<feature type="transmembrane region" description="Helical" evidence="3">
    <location>
        <begin position="264"/>
        <end position="284"/>
    </location>
</feature>
<feature type="transmembrane region" description="Helical" evidence="3">
    <location>
        <begin position="333"/>
        <end position="353"/>
    </location>
</feature>
<feature type="transmembrane region" description="Helical" evidence="3">
    <location>
        <begin position="354"/>
        <end position="374"/>
    </location>
</feature>
<feature type="transmembrane region" description="Helical" evidence="3">
    <location>
        <begin position="384"/>
        <end position="404"/>
    </location>
</feature>
<feature type="transmembrane region" description="Helical" evidence="3">
    <location>
        <begin position="409"/>
        <end position="429"/>
    </location>
</feature>
<feature type="transmembrane region" description="Helical" evidence="3">
    <location>
        <begin position="453"/>
        <end position="473"/>
    </location>
</feature>
<name>ECCD3_MYCS2</name>
<keyword id="KW-0002">3D-structure</keyword>
<keyword id="KW-0997">Cell inner membrane</keyword>
<keyword id="KW-1003">Cell membrane</keyword>
<keyword id="KW-0472">Membrane</keyword>
<keyword id="KW-1185">Reference proteome</keyword>
<keyword id="KW-0812">Transmembrane</keyword>
<keyword id="KW-1133">Transmembrane helix</keyword>
<keyword id="KW-0813">Transport</keyword>
<proteinExistence type="evidence at protein level"/>
<dbReference type="EMBL" id="CP000480">
    <property type="protein sequence ID" value="ABK74115.1"/>
    <property type="molecule type" value="Genomic_DNA"/>
</dbReference>
<dbReference type="EMBL" id="CP001663">
    <property type="protein sequence ID" value="AFP37088.1"/>
    <property type="molecule type" value="Genomic_DNA"/>
</dbReference>
<dbReference type="RefSeq" id="YP_885034.1">
    <property type="nucleotide sequence ID" value="NC_008596.1"/>
</dbReference>
<dbReference type="PDB" id="6LAR">
    <property type="method" value="EM"/>
    <property type="resolution" value="3.70 A"/>
    <property type="chains" value="B/C/E/H=1-475"/>
</dbReference>
<dbReference type="PDB" id="6SGW">
    <property type="method" value="EM"/>
    <property type="resolution" value="3.80 A"/>
    <property type="chains" value="B/C/E/H=8-472"/>
</dbReference>
<dbReference type="PDB" id="6SGX">
    <property type="method" value="EM"/>
    <property type="resolution" value="3.70 A"/>
    <property type="chains" value="B/C=8-472"/>
</dbReference>
<dbReference type="PDB" id="6SGZ">
    <property type="method" value="EM"/>
    <property type="resolution" value="3.90 A"/>
    <property type="chains" value="E/H=6-472"/>
</dbReference>
<dbReference type="PDB" id="6UMM">
    <property type="method" value="EM"/>
    <property type="resolution" value="3.70 A"/>
    <property type="chains" value="B/C/G/H=1-475"/>
</dbReference>
<dbReference type="PDBsum" id="6LAR"/>
<dbReference type="PDBsum" id="6SGW"/>
<dbReference type="PDBsum" id="6SGX"/>
<dbReference type="PDBsum" id="6SGZ"/>
<dbReference type="PDBsum" id="6UMM"/>
<dbReference type="EMDB" id="EMD-0862"/>
<dbReference type="EMDB" id="EMD-10186"/>
<dbReference type="EMDB" id="EMD-10187"/>
<dbReference type="EMDB" id="EMD-10191"/>
<dbReference type="EMDB" id="EMD-20820"/>
<dbReference type="SMR" id="A0QQ46"/>
<dbReference type="STRING" id="246196.MSMEG_0623"/>
<dbReference type="PaxDb" id="246196-MSMEI_0607"/>
<dbReference type="KEGG" id="msb:LJ00_03095"/>
<dbReference type="KEGG" id="msg:MSMEI_0607"/>
<dbReference type="KEGG" id="msm:MSMEG_0623"/>
<dbReference type="PATRIC" id="fig|246196.19.peg.619"/>
<dbReference type="eggNOG" id="ENOG5031ZT8">
    <property type="taxonomic scope" value="Bacteria"/>
</dbReference>
<dbReference type="OrthoDB" id="4764676at2"/>
<dbReference type="Proteomes" id="UP000000757">
    <property type="component" value="Chromosome"/>
</dbReference>
<dbReference type="Proteomes" id="UP000006158">
    <property type="component" value="Chromosome"/>
</dbReference>
<dbReference type="GO" id="GO:0005886">
    <property type="term" value="C:plasma membrane"/>
    <property type="evidence" value="ECO:0007669"/>
    <property type="project" value="UniProtKB-SubCell"/>
</dbReference>
<dbReference type="Gene3D" id="3.10.20.90">
    <property type="entry name" value="Phosphatidylinositol 3-kinase Catalytic Subunit, Chain A, domain 1"/>
    <property type="match status" value="1"/>
</dbReference>
<dbReference type="InterPro" id="IPR006707">
    <property type="entry name" value="T7SS_EccD"/>
</dbReference>
<dbReference type="InterPro" id="IPR024962">
    <property type="entry name" value="YukD-like"/>
</dbReference>
<dbReference type="NCBIfam" id="TIGR03920">
    <property type="entry name" value="T7SS_EccD"/>
    <property type="match status" value="1"/>
</dbReference>
<dbReference type="Pfam" id="PF08817">
    <property type="entry name" value="YukD"/>
    <property type="match status" value="1"/>
</dbReference>
<dbReference type="PIRSF" id="PIRSF017804">
    <property type="entry name" value="Secretion_EccD1"/>
    <property type="match status" value="1"/>
</dbReference>
<sequence length="475" mass="48261">MSENTVMPIVRVAVLAAGDDGGRLTEMALPSELPLREILPAVQRIVQPARENDGAADPAAAPNPVRLSLAPIGGAPFSLDATLDTVGVVDGDLLALQAVPSGPPAPRIVEDIADAAVIFSEARRRQWGPTHIARGAALALIGLILVGTGLSVAHRVITGDLLGQFIVSGIALATVIAALAVRNRSAVLATSLAVTALVPVAAAFALGVPGDFGAPNVLLAAAGVAAWSLISMAGSPDDRGIAVFTATAVTGVGVLLVAGAASLWVISSDVIGCALVLLGLIVTVQAAQLSAMWARFPLPVIPAPGDPTPAARPLSVLADLPRRVRVSQAHQTGVIAAGVLLGVAGSVALVSSANASPWAWYIVVAAAAGAALRARVWDSAACKAWLLGHSYLLAVALLVAFVIGDRYQAALWALAALAVLVLVWIVAALNPKIASPDTYSLPMRRMVGFLATGLDASLIPVMALLVGLFSLVLDR</sequence>
<reference key="1">
    <citation type="submission" date="2006-10" db="EMBL/GenBank/DDBJ databases">
        <authorList>
            <person name="Fleischmann R.D."/>
            <person name="Dodson R.J."/>
            <person name="Haft D.H."/>
            <person name="Merkel J.S."/>
            <person name="Nelson W.C."/>
            <person name="Fraser C.M."/>
        </authorList>
    </citation>
    <scope>NUCLEOTIDE SEQUENCE [LARGE SCALE GENOMIC DNA]</scope>
    <source>
        <strain>ATCC 700084 / mc(2)155</strain>
    </source>
</reference>
<reference key="2">
    <citation type="journal article" date="2007" name="Genome Biol.">
        <title>Interrupted coding sequences in Mycobacterium smegmatis: authentic mutations or sequencing errors?</title>
        <authorList>
            <person name="Deshayes C."/>
            <person name="Perrodou E."/>
            <person name="Gallien S."/>
            <person name="Euphrasie D."/>
            <person name="Schaeffer C."/>
            <person name="Van-Dorsselaer A."/>
            <person name="Poch O."/>
            <person name="Lecompte O."/>
            <person name="Reyrat J.-M."/>
        </authorList>
    </citation>
    <scope>NUCLEOTIDE SEQUENCE [LARGE SCALE GENOMIC DNA]</scope>
    <source>
        <strain>ATCC 700084 / mc(2)155</strain>
    </source>
</reference>
<reference key="3">
    <citation type="journal article" date="2009" name="Genome Res.">
        <title>Ortho-proteogenomics: multiple proteomes investigation through orthology and a new MS-based protocol.</title>
        <authorList>
            <person name="Gallien S."/>
            <person name="Perrodou E."/>
            <person name="Carapito C."/>
            <person name="Deshayes C."/>
            <person name="Reyrat J.-M."/>
            <person name="Van Dorsselaer A."/>
            <person name="Poch O."/>
            <person name="Schaeffer C."/>
            <person name="Lecompte O."/>
        </authorList>
    </citation>
    <scope>NUCLEOTIDE SEQUENCE [LARGE SCALE GENOMIC DNA]</scope>
    <source>
        <strain>ATCC 700084 / mc(2)155</strain>
    </source>
</reference>
<reference key="4">
    <citation type="journal article" date="2009" name="Proc. Natl. Acad. Sci. U.S.A.">
        <title>Mycobacterial Esx-3 is required for mycobactin-mediated iron acquisition.</title>
        <authorList>
            <person name="Siegrist M.S."/>
            <person name="Unnikrishnan M."/>
            <person name="McConnell M.J."/>
            <person name="Borowsky M."/>
            <person name="Cheng T.Y."/>
            <person name="Siddiqi N."/>
            <person name="Fortune S.M."/>
            <person name="Moody D.B."/>
            <person name="Rubin E.J."/>
        </authorList>
    </citation>
    <scope>FUNCTION</scope>
</reference>
<reference key="5">
    <citation type="journal article" date="2014" name="MBio">
        <title>Mycobacterial Esx-3 requires multiple components for iron acquisition.</title>
        <authorList>
            <person name="Siegrist M.S."/>
            <person name="Steigedal M."/>
            <person name="Ahmad R."/>
            <person name="Mehra A."/>
            <person name="Dragset M.S."/>
            <person name="Schuster B.M."/>
            <person name="Philips J.A."/>
            <person name="Carr S.A."/>
            <person name="Rubin E.J."/>
        </authorList>
    </citation>
    <scope>FUNCTION</scope>
    <scope>DISRUPTION PHENOTYPE</scope>
</reference>
<organism>
    <name type="scientific">Mycolicibacterium smegmatis (strain ATCC 700084 / mc(2)155)</name>
    <name type="common">Mycobacterium smegmatis</name>
    <dbReference type="NCBI Taxonomy" id="246196"/>
    <lineage>
        <taxon>Bacteria</taxon>
        <taxon>Bacillati</taxon>
        <taxon>Actinomycetota</taxon>
        <taxon>Actinomycetes</taxon>
        <taxon>Mycobacteriales</taxon>
        <taxon>Mycobacteriaceae</taxon>
        <taxon>Mycolicibacterium</taxon>
    </lineage>
</organism>
<comment type="function">
    <text evidence="4 5">Part of the ESX-3 specialized secretion system, which is required for siderophore-mediated iron acquisition and for the secretion of EsxH and EsxG.</text>
</comment>
<comment type="subunit">
    <text evidence="1">Part of the ESX-3 / type VII secretion system (T7SS), which is composed of cytosolic and membrane components. The ESX-3 membrane complex is composed of EccB3, EccC3, EccD3 and EccE3.</text>
</comment>
<comment type="subcellular location">
    <subcellularLocation>
        <location evidence="1">Cell inner membrane</location>
        <topology evidence="3">Multi-pass membrane protein</topology>
    </subcellularLocation>
</comment>
<comment type="disruption phenotype">
    <text evidence="5">Deletion of the gene impairs iron-bound mycobactin utilization and EsxG and EsxH export.</text>
</comment>
<comment type="similarity">
    <text evidence="7">Belongs to the EccD/Snm4 family.</text>
</comment>
<gene>
    <name evidence="6" type="primary">eccD3</name>
    <name evidence="8" type="synonym">snm</name>
    <name evidence="8" type="ordered locus">MSMEG_0623</name>
    <name evidence="9" type="ordered locus">MSMEI_0607</name>
</gene>
<accession>A0QQ46</accession>